<keyword id="KW-0489">Methyltransferase</keyword>
<keyword id="KW-0949">S-adenosyl-L-methionine</keyword>
<keyword id="KW-0808">Transferase</keyword>
<keyword id="KW-0819">tRNA processing</keyword>
<feature type="chain" id="PRO_1000084041" description="tRNA/tmRNA (uracil-C(5))-methyltransferase">
    <location>
        <begin position="1"/>
        <end position="365"/>
    </location>
</feature>
<feature type="active site" description="Nucleophile" evidence="1">
    <location>
        <position position="323"/>
    </location>
</feature>
<feature type="active site" description="Proton acceptor" evidence="1">
    <location>
        <position position="357"/>
    </location>
</feature>
<feature type="binding site" evidence="1">
    <location>
        <position position="189"/>
    </location>
    <ligand>
        <name>S-adenosyl-L-methionine</name>
        <dbReference type="ChEBI" id="CHEBI:59789"/>
    </ligand>
</feature>
<feature type="binding site" evidence="1">
    <location>
        <position position="217"/>
    </location>
    <ligand>
        <name>S-adenosyl-L-methionine</name>
        <dbReference type="ChEBI" id="CHEBI:59789"/>
    </ligand>
</feature>
<feature type="binding site" evidence="1">
    <location>
        <position position="222"/>
    </location>
    <ligand>
        <name>S-adenosyl-L-methionine</name>
        <dbReference type="ChEBI" id="CHEBI:59789"/>
    </ligand>
</feature>
<feature type="binding site" evidence="1">
    <location>
        <position position="238"/>
    </location>
    <ligand>
        <name>S-adenosyl-L-methionine</name>
        <dbReference type="ChEBI" id="CHEBI:59789"/>
    </ligand>
</feature>
<feature type="binding site" evidence="1">
    <location>
        <position position="298"/>
    </location>
    <ligand>
        <name>S-adenosyl-L-methionine</name>
        <dbReference type="ChEBI" id="CHEBI:59789"/>
    </ligand>
</feature>
<protein>
    <recommendedName>
        <fullName evidence="1">tRNA/tmRNA (uracil-C(5))-methyltransferase</fullName>
        <ecNumber evidence="1">2.1.1.-</ecNumber>
        <ecNumber evidence="1">2.1.1.35</ecNumber>
    </recommendedName>
    <alternativeName>
        <fullName evidence="1">tRNA (uracil(54)-C(5))-methyltransferase</fullName>
    </alternativeName>
    <alternativeName>
        <fullName evidence="1">tRNA(m5U54)-methyltransferase</fullName>
        <shortName evidence="1">RUMT</shortName>
    </alternativeName>
    <alternativeName>
        <fullName evidence="1">tmRNA (uracil(341)-C(5))-methyltransferase</fullName>
    </alternativeName>
</protein>
<proteinExistence type="inferred from homology"/>
<dbReference type="EC" id="2.1.1.-" evidence="1"/>
<dbReference type="EC" id="2.1.1.35" evidence="1"/>
<dbReference type="EMBL" id="CP000891">
    <property type="protein sequence ID" value="ABX47362.1"/>
    <property type="molecule type" value="Genomic_DNA"/>
</dbReference>
<dbReference type="RefSeq" id="WP_011848155.1">
    <property type="nucleotide sequence ID" value="NC_009997.1"/>
</dbReference>
<dbReference type="SMR" id="A9KW82"/>
<dbReference type="GeneID" id="11770534"/>
<dbReference type="KEGG" id="sbn:Sbal195_0180"/>
<dbReference type="HOGENOM" id="CLU_043022_0_0_6"/>
<dbReference type="Proteomes" id="UP000000770">
    <property type="component" value="Chromosome"/>
</dbReference>
<dbReference type="GO" id="GO:0005829">
    <property type="term" value="C:cytosol"/>
    <property type="evidence" value="ECO:0007669"/>
    <property type="project" value="TreeGrafter"/>
</dbReference>
<dbReference type="GO" id="GO:0019843">
    <property type="term" value="F:rRNA binding"/>
    <property type="evidence" value="ECO:0007669"/>
    <property type="project" value="TreeGrafter"/>
</dbReference>
<dbReference type="GO" id="GO:0030697">
    <property type="term" value="F:tRNA (uracil(54)-C5)-methyltransferase activity, S-adenosyl methionine-dependent"/>
    <property type="evidence" value="ECO:0007669"/>
    <property type="project" value="UniProtKB-UniRule"/>
</dbReference>
<dbReference type="GO" id="GO:0000049">
    <property type="term" value="F:tRNA binding"/>
    <property type="evidence" value="ECO:0007669"/>
    <property type="project" value="TreeGrafter"/>
</dbReference>
<dbReference type="GO" id="GO:0030488">
    <property type="term" value="P:tRNA methylation"/>
    <property type="evidence" value="ECO:0007669"/>
    <property type="project" value="UniProtKB-UniRule"/>
</dbReference>
<dbReference type="CDD" id="cd02440">
    <property type="entry name" value="AdoMet_MTases"/>
    <property type="match status" value="1"/>
</dbReference>
<dbReference type="FunFam" id="2.40.50.1070:FF:000001">
    <property type="entry name" value="tRNA/tmRNA (uracil-C(5))-methyltransferase"/>
    <property type="match status" value="1"/>
</dbReference>
<dbReference type="FunFam" id="3.40.50.150:FF:000012">
    <property type="entry name" value="tRNA/tmRNA (uracil-C(5))-methyltransferase"/>
    <property type="match status" value="1"/>
</dbReference>
<dbReference type="Gene3D" id="2.40.50.1070">
    <property type="match status" value="1"/>
</dbReference>
<dbReference type="Gene3D" id="3.40.50.150">
    <property type="entry name" value="Vaccinia Virus protein VP39"/>
    <property type="match status" value="1"/>
</dbReference>
<dbReference type="HAMAP" id="MF_01011">
    <property type="entry name" value="RNA_methyltr_TrmA"/>
    <property type="match status" value="1"/>
</dbReference>
<dbReference type="InterPro" id="IPR030390">
    <property type="entry name" value="MeTrfase_TrmA_AS"/>
</dbReference>
<dbReference type="InterPro" id="IPR030391">
    <property type="entry name" value="MeTrfase_TrmA_CS"/>
</dbReference>
<dbReference type="InterPro" id="IPR029063">
    <property type="entry name" value="SAM-dependent_MTases_sf"/>
</dbReference>
<dbReference type="InterPro" id="IPR011869">
    <property type="entry name" value="TrmA_MeTrfase"/>
</dbReference>
<dbReference type="InterPro" id="IPR010280">
    <property type="entry name" value="U5_MeTrfase_fam"/>
</dbReference>
<dbReference type="NCBIfam" id="TIGR02143">
    <property type="entry name" value="trmA_only"/>
    <property type="match status" value="1"/>
</dbReference>
<dbReference type="PANTHER" id="PTHR47790">
    <property type="entry name" value="TRNA/TMRNA (URACIL-C(5))-METHYLTRANSFERASE"/>
    <property type="match status" value="1"/>
</dbReference>
<dbReference type="PANTHER" id="PTHR47790:SF2">
    <property type="entry name" value="TRNA_TMRNA (URACIL-C(5))-METHYLTRANSFERASE"/>
    <property type="match status" value="1"/>
</dbReference>
<dbReference type="Pfam" id="PF05958">
    <property type="entry name" value="tRNA_U5-meth_tr"/>
    <property type="match status" value="1"/>
</dbReference>
<dbReference type="SUPFAM" id="SSF53335">
    <property type="entry name" value="S-adenosyl-L-methionine-dependent methyltransferases"/>
    <property type="match status" value="1"/>
</dbReference>
<dbReference type="PROSITE" id="PS51687">
    <property type="entry name" value="SAM_MT_RNA_M5U"/>
    <property type="match status" value="1"/>
</dbReference>
<dbReference type="PROSITE" id="PS01230">
    <property type="entry name" value="TRMA_1"/>
    <property type="match status" value="1"/>
</dbReference>
<dbReference type="PROSITE" id="PS01231">
    <property type="entry name" value="TRMA_2"/>
    <property type="match status" value="1"/>
</dbReference>
<organism>
    <name type="scientific">Shewanella baltica (strain OS195)</name>
    <dbReference type="NCBI Taxonomy" id="399599"/>
    <lineage>
        <taxon>Bacteria</taxon>
        <taxon>Pseudomonadati</taxon>
        <taxon>Pseudomonadota</taxon>
        <taxon>Gammaproteobacteria</taxon>
        <taxon>Alteromonadales</taxon>
        <taxon>Shewanellaceae</taxon>
        <taxon>Shewanella</taxon>
    </lineage>
</organism>
<reference key="1">
    <citation type="submission" date="2007-11" db="EMBL/GenBank/DDBJ databases">
        <title>Complete sequence of chromosome of Shewanella baltica OS195.</title>
        <authorList>
            <consortium name="US DOE Joint Genome Institute"/>
            <person name="Copeland A."/>
            <person name="Lucas S."/>
            <person name="Lapidus A."/>
            <person name="Barry K."/>
            <person name="Glavina del Rio T."/>
            <person name="Dalin E."/>
            <person name="Tice H."/>
            <person name="Pitluck S."/>
            <person name="Chain P."/>
            <person name="Malfatti S."/>
            <person name="Shin M."/>
            <person name="Vergez L."/>
            <person name="Schmutz J."/>
            <person name="Larimer F."/>
            <person name="Land M."/>
            <person name="Hauser L."/>
            <person name="Kyrpides N."/>
            <person name="Kim E."/>
            <person name="Brettar I."/>
            <person name="Rodrigues J."/>
            <person name="Konstantinidis K."/>
            <person name="Klappenbach J."/>
            <person name="Hofle M."/>
            <person name="Tiedje J."/>
            <person name="Richardson P."/>
        </authorList>
    </citation>
    <scope>NUCLEOTIDE SEQUENCE [LARGE SCALE GENOMIC DNA]</scope>
    <source>
        <strain>OS195</strain>
    </source>
</reference>
<gene>
    <name evidence="1" type="primary">trmA</name>
    <name type="ordered locus">Sbal195_0180</name>
</gene>
<name>TRMA_SHEB9</name>
<comment type="function">
    <text evidence="1">Dual-specificity methyltransferase that catalyzes the formation of 5-methyluridine at position 54 (m5U54) in all tRNAs, and that of position 341 (m5U341) in tmRNA (transfer-mRNA).</text>
</comment>
<comment type="catalytic activity">
    <reaction evidence="1">
        <text>uridine(54) in tRNA + S-adenosyl-L-methionine = 5-methyluridine(54) in tRNA + S-adenosyl-L-homocysteine + H(+)</text>
        <dbReference type="Rhea" id="RHEA:42712"/>
        <dbReference type="Rhea" id="RHEA-COMP:10167"/>
        <dbReference type="Rhea" id="RHEA-COMP:10193"/>
        <dbReference type="ChEBI" id="CHEBI:15378"/>
        <dbReference type="ChEBI" id="CHEBI:57856"/>
        <dbReference type="ChEBI" id="CHEBI:59789"/>
        <dbReference type="ChEBI" id="CHEBI:65315"/>
        <dbReference type="ChEBI" id="CHEBI:74447"/>
        <dbReference type="EC" id="2.1.1.35"/>
    </reaction>
</comment>
<comment type="catalytic activity">
    <reaction evidence="1">
        <text>uridine(341) in tmRNA + S-adenosyl-L-methionine = 5-methyluridine(341) in tmRNA + S-adenosyl-L-homocysteine + H(+)</text>
        <dbReference type="Rhea" id="RHEA:43612"/>
        <dbReference type="Rhea" id="RHEA-COMP:10630"/>
        <dbReference type="Rhea" id="RHEA-COMP:10631"/>
        <dbReference type="ChEBI" id="CHEBI:15378"/>
        <dbReference type="ChEBI" id="CHEBI:57856"/>
        <dbReference type="ChEBI" id="CHEBI:59789"/>
        <dbReference type="ChEBI" id="CHEBI:65315"/>
        <dbReference type="ChEBI" id="CHEBI:74447"/>
    </reaction>
</comment>
<comment type="similarity">
    <text evidence="1">Belongs to the class I-like SAM-binding methyltransferase superfamily. RNA M5U methyltransferase family. TrmA subfamily.</text>
</comment>
<sequence length="365" mass="42013">MNLAAMDPQTYDTQLEHKRIKLEQAFAQFETPSVEVFASEPANYRMRAEFRMWHDGDDLYYYMFDKVLNEKVRCDQYLPASVLINQMMSALIAELKPNPSLRHKLFQVDFLSTLSGEILVSLLYHRQLDDQWRADATALKAKLSSQFNVNIIGRARKQKIDLDKDFVVESLQVNDKTFLYKQIENSFTQPNAKVSVKMLEWAIDATQNSQGDLLELYCGNGNFSIALAQNFNRVLATELAKPSVDAAQYNIEVNGIENLQIIRMSAEDFSDAMAKKRSFRRLEGIDLDSYVCNTIFVDPPRAGIDPDTLALVQGYERILYISCNPETLKDNLQQLNETHKVTRFALFDQFPYTDHMETGVLLERR</sequence>
<evidence type="ECO:0000255" key="1">
    <source>
        <dbReference type="HAMAP-Rule" id="MF_01011"/>
    </source>
</evidence>
<accession>A9KW82</accession>